<proteinExistence type="inferred from homology"/>
<evidence type="ECO:0000255" key="1">
    <source>
        <dbReference type="HAMAP-Rule" id="MF_00378"/>
    </source>
</evidence>
<comment type="function">
    <text evidence="1">Bidirectionally degrades single-stranded DNA into large acid-insoluble oligonucleotides, which are then degraded further into small acid-soluble oligonucleotides.</text>
</comment>
<comment type="catalytic activity">
    <reaction evidence="1">
        <text>Exonucleolytic cleavage in either 5'- to 3'- or 3'- to 5'-direction to yield nucleoside 5'-phosphates.</text>
        <dbReference type="EC" id="3.1.11.6"/>
    </reaction>
</comment>
<comment type="subunit">
    <text evidence="1">Heterooligomer composed of large and small subunits.</text>
</comment>
<comment type="subcellular location">
    <subcellularLocation>
        <location evidence="1">Cytoplasm</location>
    </subcellularLocation>
</comment>
<comment type="similarity">
    <text evidence="1">Belongs to the XseA family.</text>
</comment>
<name>EX7L_MYCTO</name>
<feature type="chain" id="PRO_0000428610" description="Exodeoxyribonuclease 7 large subunit">
    <location>
        <begin position="1"/>
        <end position="415"/>
    </location>
</feature>
<keyword id="KW-0963">Cytoplasm</keyword>
<keyword id="KW-0269">Exonuclease</keyword>
<keyword id="KW-0378">Hydrolase</keyword>
<keyword id="KW-0540">Nuclease</keyword>
<keyword id="KW-1185">Reference proteome</keyword>
<dbReference type="EC" id="3.1.11.6" evidence="1"/>
<dbReference type="EMBL" id="AE000516">
    <property type="protein sequence ID" value="AAK45396.1"/>
    <property type="molecule type" value="Genomic_DNA"/>
</dbReference>
<dbReference type="PIR" id="B70898">
    <property type="entry name" value="B70898"/>
</dbReference>
<dbReference type="RefSeq" id="WP_003405846.1">
    <property type="nucleotide sequence ID" value="NZ_KK341227.1"/>
</dbReference>
<dbReference type="SMR" id="P9WF30"/>
<dbReference type="GeneID" id="45425082"/>
<dbReference type="KEGG" id="mtc:MT1139"/>
<dbReference type="PATRIC" id="fig|83331.31.peg.1231"/>
<dbReference type="HOGENOM" id="CLU_023625_2_1_11"/>
<dbReference type="Proteomes" id="UP000001020">
    <property type="component" value="Chromosome"/>
</dbReference>
<dbReference type="GO" id="GO:0005737">
    <property type="term" value="C:cytoplasm"/>
    <property type="evidence" value="ECO:0007669"/>
    <property type="project" value="UniProtKB-SubCell"/>
</dbReference>
<dbReference type="GO" id="GO:0009318">
    <property type="term" value="C:exodeoxyribonuclease VII complex"/>
    <property type="evidence" value="ECO:0007669"/>
    <property type="project" value="InterPro"/>
</dbReference>
<dbReference type="GO" id="GO:0008855">
    <property type="term" value="F:exodeoxyribonuclease VII activity"/>
    <property type="evidence" value="ECO:0007669"/>
    <property type="project" value="UniProtKB-UniRule"/>
</dbReference>
<dbReference type="GO" id="GO:0003676">
    <property type="term" value="F:nucleic acid binding"/>
    <property type="evidence" value="ECO:0007669"/>
    <property type="project" value="InterPro"/>
</dbReference>
<dbReference type="GO" id="GO:0006308">
    <property type="term" value="P:DNA catabolic process"/>
    <property type="evidence" value="ECO:0007669"/>
    <property type="project" value="UniProtKB-UniRule"/>
</dbReference>
<dbReference type="CDD" id="cd04489">
    <property type="entry name" value="ExoVII_LU_OBF"/>
    <property type="match status" value="1"/>
</dbReference>
<dbReference type="HAMAP" id="MF_00378">
    <property type="entry name" value="Exonuc_7_L"/>
    <property type="match status" value="1"/>
</dbReference>
<dbReference type="InterPro" id="IPR003753">
    <property type="entry name" value="Exonuc_VII_L"/>
</dbReference>
<dbReference type="InterPro" id="IPR020579">
    <property type="entry name" value="Exonuc_VII_lsu_C"/>
</dbReference>
<dbReference type="InterPro" id="IPR025824">
    <property type="entry name" value="OB-fold_nuc-bd_dom"/>
</dbReference>
<dbReference type="NCBIfam" id="TIGR00237">
    <property type="entry name" value="xseA"/>
    <property type="match status" value="1"/>
</dbReference>
<dbReference type="PANTHER" id="PTHR30008">
    <property type="entry name" value="EXODEOXYRIBONUCLEASE 7 LARGE SUBUNIT"/>
    <property type="match status" value="1"/>
</dbReference>
<dbReference type="PANTHER" id="PTHR30008:SF0">
    <property type="entry name" value="EXODEOXYRIBONUCLEASE 7 LARGE SUBUNIT"/>
    <property type="match status" value="1"/>
</dbReference>
<dbReference type="Pfam" id="PF02601">
    <property type="entry name" value="Exonuc_VII_L"/>
    <property type="match status" value="1"/>
</dbReference>
<dbReference type="Pfam" id="PF13742">
    <property type="entry name" value="tRNA_anti_2"/>
    <property type="match status" value="1"/>
</dbReference>
<protein>
    <recommendedName>
        <fullName evidence="1">Exodeoxyribonuclease 7 large subunit</fullName>
        <ecNumber evidence="1">3.1.11.6</ecNumber>
    </recommendedName>
    <alternativeName>
        <fullName evidence="1">Exodeoxyribonuclease VII large subunit</fullName>
        <shortName evidence="1">Exonuclease VII large subunit</shortName>
    </alternativeName>
</protein>
<organism>
    <name type="scientific">Mycobacterium tuberculosis (strain CDC 1551 / Oshkosh)</name>
    <dbReference type="NCBI Taxonomy" id="83331"/>
    <lineage>
        <taxon>Bacteria</taxon>
        <taxon>Bacillati</taxon>
        <taxon>Actinomycetota</taxon>
        <taxon>Actinomycetes</taxon>
        <taxon>Mycobacteriales</taxon>
        <taxon>Mycobacteriaceae</taxon>
        <taxon>Mycobacterium</taxon>
        <taxon>Mycobacterium tuberculosis complex</taxon>
    </lineage>
</organism>
<sequence length="415" mass="44628">MTQNSAENPFPVRAVAIRVAGWIDKLGAVWVEGQLAQITMRPDAKTVFMVLRDPAADMSLTVTCSRDLVLSAPVKLAEGVQVVVCGKPSFYTGRGTFSLRLSEIRAVGIGELLARIDRLRRLLDAEGLFDPRLKRPIPYLPNMIGLITGRASAAERDVTTVASARWPAARFAVRNVAVQGPNAVGQIVEALRELDRDPDVDVIVLARGGGSVEDLLPFSDETLCRAIAACRTPVVSAVGHEPDNPLCDLVVDLRAATPTDAAKKVVPDTAAEQRLIDDLRRRSAQALRNWVSREQRAVAQLRSRPVLADPMTMVSVRAEEVHRARSTLRRNLTLMVAAETERIGHLAARLATLGPAATLARGYAIVQTVAQTGPEGGSEPQVLRSVHDAPEGTKLRVRVADGALAAVSEGQTNGL</sequence>
<gene>
    <name evidence="1" type="primary">xseA</name>
    <name type="ordered locus">MT1139</name>
</gene>
<reference key="1">
    <citation type="journal article" date="2002" name="J. Bacteriol.">
        <title>Whole-genome comparison of Mycobacterium tuberculosis clinical and laboratory strains.</title>
        <authorList>
            <person name="Fleischmann R.D."/>
            <person name="Alland D."/>
            <person name="Eisen J.A."/>
            <person name="Carpenter L."/>
            <person name="White O."/>
            <person name="Peterson J.D."/>
            <person name="DeBoy R.T."/>
            <person name="Dodson R.J."/>
            <person name="Gwinn M.L."/>
            <person name="Haft D.H."/>
            <person name="Hickey E.K."/>
            <person name="Kolonay J.F."/>
            <person name="Nelson W.C."/>
            <person name="Umayam L.A."/>
            <person name="Ermolaeva M.D."/>
            <person name="Salzberg S.L."/>
            <person name="Delcher A."/>
            <person name="Utterback T.R."/>
            <person name="Weidman J.F."/>
            <person name="Khouri H.M."/>
            <person name="Gill J."/>
            <person name="Mikula A."/>
            <person name="Bishai W."/>
            <person name="Jacobs W.R. Jr."/>
            <person name="Venter J.C."/>
            <person name="Fraser C.M."/>
        </authorList>
    </citation>
    <scope>NUCLEOTIDE SEQUENCE [LARGE SCALE GENOMIC DNA]</scope>
    <source>
        <strain>CDC 1551 / Oshkosh</strain>
    </source>
</reference>
<accession>P9WF30</accession>
<accession>L0T5X0</accession>
<accession>O53456</accession>
<accession>P67447</accession>